<feature type="chain" id="PRO_0000272806" description="Large ribosomal subunit protein uL23">
    <location>
        <begin position="1"/>
        <end position="99"/>
    </location>
</feature>
<evidence type="ECO:0000255" key="1">
    <source>
        <dbReference type="HAMAP-Rule" id="MF_01369"/>
    </source>
</evidence>
<evidence type="ECO:0000305" key="2"/>
<name>RL23_PSEPF</name>
<sequence>MNQERVFKVLLGPHVSEKATVLADKKGQFVFKVATDATKLEIKKAVESLFSVKVERVTTLNVLGKSKRTARGLGKRNDWKKAVISLQPGQDLDFSSSAE</sequence>
<keyword id="KW-0687">Ribonucleoprotein</keyword>
<keyword id="KW-0689">Ribosomal protein</keyword>
<keyword id="KW-0694">RNA-binding</keyword>
<keyword id="KW-0699">rRNA-binding</keyword>
<proteinExistence type="inferred from homology"/>
<reference key="1">
    <citation type="journal article" date="2009" name="Genome Biol.">
        <title>Genomic and genetic analyses of diversity and plant interactions of Pseudomonas fluorescens.</title>
        <authorList>
            <person name="Silby M.W."/>
            <person name="Cerdeno-Tarraga A.M."/>
            <person name="Vernikos G.S."/>
            <person name="Giddens S.R."/>
            <person name="Jackson R.W."/>
            <person name="Preston G.M."/>
            <person name="Zhang X.-X."/>
            <person name="Moon C.D."/>
            <person name="Gehrig S.M."/>
            <person name="Godfrey S.A.C."/>
            <person name="Knight C.G."/>
            <person name="Malone J.G."/>
            <person name="Robinson Z."/>
            <person name="Spiers A.J."/>
            <person name="Harris S."/>
            <person name="Challis G.L."/>
            <person name="Yaxley A.M."/>
            <person name="Harris D."/>
            <person name="Seeger K."/>
            <person name="Murphy L."/>
            <person name="Rutter S."/>
            <person name="Squares R."/>
            <person name="Quail M.A."/>
            <person name="Saunders E."/>
            <person name="Mavromatis K."/>
            <person name="Brettin T.S."/>
            <person name="Bentley S.D."/>
            <person name="Hothersall J."/>
            <person name="Stephens E."/>
            <person name="Thomas C.M."/>
            <person name="Parkhill J."/>
            <person name="Levy S.B."/>
            <person name="Rainey P.B."/>
            <person name="Thomson N.R."/>
        </authorList>
    </citation>
    <scope>NUCLEOTIDE SEQUENCE [LARGE SCALE GENOMIC DNA]</scope>
    <source>
        <strain>Pf0-1</strain>
    </source>
</reference>
<protein>
    <recommendedName>
        <fullName evidence="1">Large ribosomal subunit protein uL23</fullName>
    </recommendedName>
    <alternativeName>
        <fullName evidence="2">50S ribosomal protein L23</fullName>
    </alternativeName>
</protein>
<organism>
    <name type="scientific">Pseudomonas fluorescens (strain Pf0-1)</name>
    <dbReference type="NCBI Taxonomy" id="205922"/>
    <lineage>
        <taxon>Bacteria</taxon>
        <taxon>Pseudomonadati</taxon>
        <taxon>Pseudomonadota</taxon>
        <taxon>Gammaproteobacteria</taxon>
        <taxon>Pseudomonadales</taxon>
        <taxon>Pseudomonadaceae</taxon>
        <taxon>Pseudomonas</taxon>
    </lineage>
</organism>
<gene>
    <name evidence="1" type="primary">rplW</name>
    <name type="ordered locus">Pfl01_5077</name>
</gene>
<dbReference type="EMBL" id="CP000094">
    <property type="protein sequence ID" value="ABA76814.1"/>
    <property type="molecule type" value="Genomic_DNA"/>
</dbReference>
<dbReference type="RefSeq" id="WP_002555488.1">
    <property type="nucleotide sequence ID" value="NC_007492.2"/>
</dbReference>
<dbReference type="SMR" id="Q3K5Z0"/>
<dbReference type="GeneID" id="98113705"/>
<dbReference type="KEGG" id="pfo:Pfl01_5077"/>
<dbReference type="eggNOG" id="COG0089">
    <property type="taxonomic scope" value="Bacteria"/>
</dbReference>
<dbReference type="HOGENOM" id="CLU_037562_3_1_6"/>
<dbReference type="Proteomes" id="UP000002704">
    <property type="component" value="Chromosome"/>
</dbReference>
<dbReference type="GO" id="GO:1990904">
    <property type="term" value="C:ribonucleoprotein complex"/>
    <property type="evidence" value="ECO:0007669"/>
    <property type="project" value="UniProtKB-KW"/>
</dbReference>
<dbReference type="GO" id="GO:0005840">
    <property type="term" value="C:ribosome"/>
    <property type="evidence" value="ECO:0007669"/>
    <property type="project" value="UniProtKB-KW"/>
</dbReference>
<dbReference type="GO" id="GO:0019843">
    <property type="term" value="F:rRNA binding"/>
    <property type="evidence" value="ECO:0007669"/>
    <property type="project" value="UniProtKB-UniRule"/>
</dbReference>
<dbReference type="GO" id="GO:0003735">
    <property type="term" value="F:structural constituent of ribosome"/>
    <property type="evidence" value="ECO:0007669"/>
    <property type="project" value="InterPro"/>
</dbReference>
<dbReference type="GO" id="GO:0006412">
    <property type="term" value="P:translation"/>
    <property type="evidence" value="ECO:0007669"/>
    <property type="project" value="UniProtKB-UniRule"/>
</dbReference>
<dbReference type="FunFam" id="3.30.70.330:FF:000001">
    <property type="entry name" value="50S ribosomal protein L23"/>
    <property type="match status" value="1"/>
</dbReference>
<dbReference type="Gene3D" id="3.30.70.330">
    <property type="match status" value="1"/>
</dbReference>
<dbReference type="HAMAP" id="MF_01369_B">
    <property type="entry name" value="Ribosomal_uL23_B"/>
    <property type="match status" value="1"/>
</dbReference>
<dbReference type="InterPro" id="IPR012677">
    <property type="entry name" value="Nucleotide-bd_a/b_plait_sf"/>
</dbReference>
<dbReference type="InterPro" id="IPR013025">
    <property type="entry name" value="Ribosomal_uL23-like"/>
</dbReference>
<dbReference type="InterPro" id="IPR012678">
    <property type="entry name" value="Ribosomal_uL23/eL15/eS24_sf"/>
</dbReference>
<dbReference type="NCBIfam" id="NF004359">
    <property type="entry name" value="PRK05738.1-3"/>
    <property type="match status" value="1"/>
</dbReference>
<dbReference type="NCBIfam" id="NF004363">
    <property type="entry name" value="PRK05738.2-4"/>
    <property type="match status" value="1"/>
</dbReference>
<dbReference type="PANTHER" id="PTHR11620">
    <property type="entry name" value="60S RIBOSOMAL PROTEIN L23A"/>
    <property type="match status" value="1"/>
</dbReference>
<dbReference type="Pfam" id="PF00276">
    <property type="entry name" value="Ribosomal_L23"/>
    <property type="match status" value="1"/>
</dbReference>
<dbReference type="SUPFAM" id="SSF54189">
    <property type="entry name" value="Ribosomal proteins S24e, L23 and L15e"/>
    <property type="match status" value="1"/>
</dbReference>
<comment type="function">
    <text evidence="1">One of the early assembly proteins it binds 23S rRNA. One of the proteins that surrounds the polypeptide exit tunnel on the outside of the ribosome. Forms the main docking site for trigger factor binding to the ribosome.</text>
</comment>
<comment type="subunit">
    <text evidence="1">Part of the 50S ribosomal subunit. Contacts protein L29, and trigger factor when it is bound to the ribosome.</text>
</comment>
<comment type="similarity">
    <text evidence="1">Belongs to the universal ribosomal protein uL23 family.</text>
</comment>
<accession>Q3K5Z0</accession>